<comment type="function">
    <text evidence="2 3">Involved in the signal transduction pathway mediated by multiple Wnt genes (By similarity). Required during ciliogenesis for the docking of basal bodies to the apical plasma membrane (By similarity).</text>
</comment>
<comment type="subcellular location">
    <subcellularLocation>
        <location evidence="1">Cytoplasm</location>
    </subcellularLocation>
</comment>
<comment type="similarity">
    <text evidence="5">Belongs to the DSH family.</text>
</comment>
<gene>
    <name evidence="4" type="primary">dvl3</name>
</gene>
<organism>
    <name type="scientific">Xenopus tropicalis</name>
    <name type="common">Western clawed frog</name>
    <name type="synonym">Silurana tropicalis</name>
    <dbReference type="NCBI Taxonomy" id="8364"/>
    <lineage>
        <taxon>Eukaryota</taxon>
        <taxon>Metazoa</taxon>
        <taxon>Chordata</taxon>
        <taxon>Craniata</taxon>
        <taxon>Vertebrata</taxon>
        <taxon>Euteleostomi</taxon>
        <taxon>Amphibia</taxon>
        <taxon>Batrachia</taxon>
        <taxon>Anura</taxon>
        <taxon>Pipoidea</taxon>
        <taxon>Pipidae</taxon>
        <taxon>Xenopodinae</taxon>
        <taxon>Xenopus</taxon>
        <taxon>Silurana</taxon>
    </lineage>
</organism>
<feature type="chain" id="PRO_0000354667" description="Segment polarity protein dishevelled homolog DVL-3">
    <location>
        <begin position="1"/>
        <end position="713"/>
    </location>
</feature>
<feature type="domain" description="DIX" evidence="7">
    <location>
        <begin position="1"/>
        <end position="82"/>
    </location>
</feature>
<feature type="domain" description="PDZ" evidence="8">
    <location>
        <begin position="248"/>
        <end position="333"/>
    </location>
</feature>
<feature type="domain" description="DEP" evidence="6">
    <location>
        <begin position="421"/>
        <end position="495"/>
    </location>
</feature>
<feature type="region of interest" description="Disordered" evidence="9">
    <location>
        <begin position="87"/>
        <end position="235"/>
    </location>
</feature>
<feature type="region of interest" description="Disordered" evidence="9">
    <location>
        <begin position="508"/>
        <end position="527"/>
    </location>
</feature>
<feature type="region of interest" description="Disordered" evidence="9">
    <location>
        <begin position="545"/>
        <end position="652"/>
    </location>
</feature>
<feature type="compositionally biased region" description="Polar residues" evidence="9">
    <location>
        <begin position="87"/>
        <end position="98"/>
    </location>
</feature>
<feature type="compositionally biased region" description="Polar residues" evidence="9">
    <location>
        <begin position="118"/>
        <end position="127"/>
    </location>
</feature>
<feature type="compositionally biased region" description="Basic and acidic residues" evidence="9">
    <location>
        <begin position="140"/>
        <end position="155"/>
    </location>
</feature>
<feature type="compositionally biased region" description="Low complexity" evidence="9">
    <location>
        <begin position="173"/>
        <end position="189"/>
    </location>
</feature>
<feature type="compositionally biased region" description="Polar residues" evidence="9">
    <location>
        <begin position="199"/>
        <end position="210"/>
    </location>
</feature>
<feature type="compositionally biased region" description="Basic residues" evidence="9">
    <location>
        <begin position="212"/>
        <end position="225"/>
    </location>
</feature>
<feature type="compositionally biased region" description="Polar residues" evidence="9">
    <location>
        <begin position="508"/>
        <end position="518"/>
    </location>
</feature>
<feature type="compositionally biased region" description="Low complexity" evidence="9">
    <location>
        <begin position="564"/>
        <end position="579"/>
    </location>
</feature>
<feature type="compositionally biased region" description="Basic and acidic residues" evidence="9">
    <location>
        <begin position="580"/>
        <end position="593"/>
    </location>
</feature>
<feature type="compositionally biased region" description="Basic and acidic residues" evidence="9">
    <location>
        <begin position="602"/>
        <end position="618"/>
    </location>
</feature>
<feature type="compositionally biased region" description="Basic residues" evidence="9">
    <location>
        <begin position="629"/>
        <end position="646"/>
    </location>
</feature>
<proteinExistence type="evidence at transcript level"/>
<name>DVL3_XENTR</name>
<accession>B1WAP7</accession>
<dbReference type="EMBL" id="BC161453">
    <property type="protein sequence ID" value="AAI61453.1"/>
    <property type="molecule type" value="mRNA"/>
</dbReference>
<dbReference type="RefSeq" id="NP_001116929.1">
    <property type="nucleotide sequence ID" value="NM_001123457.1"/>
</dbReference>
<dbReference type="SMR" id="B1WAP7"/>
<dbReference type="FunCoup" id="B1WAP7">
    <property type="interactions" value="2393"/>
</dbReference>
<dbReference type="STRING" id="8364.ENSXETP00000002375"/>
<dbReference type="PaxDb" id="8364-ENSXETP00000037606"/>
<dbReference type="GeneID" id="100144702"/>
<dbReference type="KEGG" id="xtr:100144702"/>
<dbReference type="AGR" id="Xenbase:XB-GENE-977362"/>
<dbReference type="CTD" id="1857"/>
<dbReference type="Xenbase" id="XB-GENE-977362">
    <property type="gene designation" value="dvl3"/>
</dbReference>
<dbReference type="eggNOG" id="KOG3571">
    <property type="taxonomic scope" value="Eukaryota"/>
</dbReference>
<dbReference type="HOGENOM" id="CLU_012601_1_0_1"/>
<dbReference type="InParanoid" id="B1WAP7"/>
<dbReference type="OMA" id="RFEEFHL"/>
<dbReference type="OrthoDB" id="10031689at2759"/>
<dbReference type="Reactome" id="R-XTR-201688">
    <property type="pathway name" value="WNT mediated activation of DVL"/>
</dbReference>
<dbReference type="Reactome" id="R-XTR-4086400">
    <property type="pathway name" value="PCP/CE pathway"/>
</dbReference>
<dbReference type="Reactome" id="R-XTR-4641258">
    <property type="pathway name" value="Degradation of DVL"/>
</dbReference>
<dbReference type="Reactome" id="R-XTR-5663220">
    <property type="pathway name" value="RHO GTPases Activate Formins"/>
</dbReference>
<dbReference type="Proteomes" id="UP000008143">
    <property type="component" value="Chromosome 5"/>
</dbReference>
<dbReference type="Bgee" id="ENSXETG00000017275">
    <property type="expression patterns" value="Expressed in blastula and 12 other cell types or tissues"/>
</dbReference>
<dbReference type="GO" id="GO:0005737">
    <property type="term" value="C:cytoplasm"/>
    <property type="evidence" value="ECO:0007669"/>
    <property type="project" value="UniProtKB-SubCell"/>
</dbReference>
<dbReference type="GO" id="GO:0008013">
    <property type="term" value="F:beta-catenin binding"/>
    <property type="evidence" value="ECO:0000250"/>
    <property type="project" value="UniProtKB"/>
</dbReference>
<dbReference type="GO" id="GO:0032053">
    <property type="term" value="P:ciliary basal body organization"/>
    <property type="evidence" value="ECO:0000250"/>
    <property type="project" value="UniProtKB"/>
</dbReference>
<dbReference type="GO" id="GO:0060271">
    <property type="term" value="P:cilium assembly"/>
    <property type="evidence" value="ECO:0000250"/>
    <property type="project" value="UniProtKB"/>
</dbReference>
<dbReference type="GO" id="GO:0035556">
    <property type="term" value="P:intracellular signal transduction"/>
    <property type="evidence" value="ECO:0007669"/>
    <property type="project" value="InterPro"/>
</dbReference>
<dbReference type="GO" id="GO:0016055">
    <property type="term" value="P:Wnt signaling pathway"/>
    <property type="evidence" value="ECO:0007669"/>
    <property type="project" value="UniProtKB-KW"/>
</dbReference>
<dbReference type="CDD" id="cd04438">
    <property type="entry name" value="DEP_dishevelled"/>
    <property type="match status" value="1"/>
</dbReference>
<dbReference type="CDD" id="cd06717">
    <property type="entry name" value="PDZ_Dishevelled-like"/>
    <property type="match status" value="1"/>
</dbReference>
<dbReference type="FunFam" id="2.40.240.130:FF:000001">
    <property type="entry name" value="Segment polarity protein dishevelled homolog DVL-1"/>
    <property type="match status" value="1"/>
</dbReference>
<dbReference type="FunFam" id="2.30.42.10:FF:000014">
    <property type="entry name" value="Segment polarity protein dishevelled homolog DVL-3"/>
    <property type="match status" value="1"/>
</dbReference>
<dbReference type="FunFam" id="1.10.10.10:FF:000040">
    <property type="entry name" value="segment polarity protein dishevelled homolog DVL-3"/>
    <property type="match status" value="1"/>
</dbReference>
<dbReference type="Gene3D" id="2.30.42.10">
    <property type="match status" value="1"/>
</dbReference>
<dbReference type="Gene3D" id="2.40.240.130">
    <property type="match status" value="1"/>
</dbReference>
<dbReference type="Gene3D" id="1.10.10.10">
    <property type="entry name" value="Winged helix-like DNA-binding domain superfamily/Winged helix DNA-binding domain"/>
    <property type="match status" value="1"/>
</dbReference>
<dbReference type="InterPro" id="IPR000591">
    <property type="entry name" value="DEP_dom"/>
</dbReference>
<dbReference type="InterPro" id="IPR024580">
    <property type="entry name" value="Dishevelled_C-dom"/>
</dbReference>
<dbReference type="InterPro" id="IPR008339">
    <property type="entry name" value="Dishevelled_fam"/>
</dbReference>
<dbReference type="InterPro" id="IPR003351">
    <property type="entry name" value="Dishevelled_protein_dom"/>
</dbReference>
<dbReference type="InterPro" id="IPR001158">
    <property type="entry name" value="DIX"/>
</dbReference>
<dbReference type="InterPro" id="IPR038207">
    <property type="entry name" value="DIX_dom_sf"/>
</dbReference>
<dbReference type="InterPro" id="IPR015506">
    <property type="entry name" value="Dsh/Dvl-rel"/>
</dbReference>
<dbReference type="InterPro" id="IPR001478">
    <property type="entry name" value="PDZ"/>
</dbReference>
<dbReference type="InterPro" id="IPR036034">
    <property type="entry name" value="PDZ_sf"/>
</dbReference>
<dbReference type="InterPro" id="IPR029071">
    <property type="entry name" value="Ubiquitin-like_domsf"/>
</dbReference>
<dbReference type="InterPro" id="IPR036388">
    <property type="entry name" value="WH-like_DNA-bd_sf"/>
</dbReference>
<dbReference type="InterPro" id="IPR036390">
    <property type="entry name" value="WH_DNA-bd_sf"/>
</dbReference>
<dbReference type="PANTHER" id="PTHR10878">
    <property type="entry name" value="SEGMENT POLARITY PROTEIN DISHEVELLED"/>
    <property type="match status" value="1"/>
</dbReference>
<dbReference type="PANTHER" id="PTHR10878:SF6">
    <property type="entry name" value="SEGMENT POLARITY PROTEIN DISHEVELLED HOMOLOG DVL-3"/>
    <property type="match status" value="1"/>
</dbReference>
<dbReference type="Pfam" id="PF00610">
    <property type="entry name" value="DEP"/>
    <property type="match status" value="1"/>
</dbReference>
<dbReference type="Pfam" id="PF02377">
    <property type="entry name" value="Dishevelled"/>
    <property type="match status" value="1"/>
</dbReference>
<dbReference type="Pfam" id="PF00778">
    <property type="entry name" value="DIX"/>
    <property type="match status" value="1"/>
</dbReference>
<dbReference type="Pfam" id="PF12316">
    <property type="entry name" value="Dsh_C"/>
    <property type="match status" value="1"/>
</dbReference>
<dbReference type="Pfam" id="PF00595">
    <property type="entry name" value="PDZ"/>
    <property type="match status" value="1"/>
</dbReference>
<dbReference type="PRINTS" id="PR01760">
    <property type="entry name" value="DISHEVELLED"/>
</dbReference>
<dbReference type="PRINTS" id="PR01761">
    <property type="entry name" value="DISHEVELLED1"/>
</dbReference>
<dbReference type="SMART" id="SM00021">
    <property type="entry name" value="DAX"/>
    <property type="match status" value="1"/>
</dbReference>
<dbReference type="SMART" id="SM00049">
    <property type="entry name" value="DEP"/>
    <property type="match status" value="1"/>
</dbReference>
<dbReference type="SMART" id="SM00228">
    <property type="entry name" value="PDZ"/>
    <property type="match status" value="1"/>
</dbReference>
<dbReference type="SUPFAM" id="SSF50156">
    <property type="entry name" value="PDZ domain-like"/>
    <property type="match status" value="1"/>
</dbReference>
<dbReference type="SUPFAM" id="SSF54236">
    <property type="entry name" value="Ubiquitin-like"/>
    <property type="match status" value="1"/>
</dbReference>
<dbReference type="SUPFAM" id="SSF46785">
    <property type="entry name" value="Winged helix' DNA-binding domain"/>
    <property type="match status" value="1"/>
</dbReference>
<dbReference type="PROSITE" id="PS50186">
    <property type="entry name" value="DEP"/>
    <property type="match status" value="1"/>
</dbReference>
<dbReference type="PROSITE" id="PS50841">
    <property type="entry name" value="DIX"/>
    <property type="match status" value="1"/>
</dbReference>
<dbReference type="PROSITE" id="PS50106">
    <property type="entry name" value="PDZ"/>
    <property type="match status" value="1"/>
</dbReference>
<reference evidence="10" key="1">
    <citation type="submission" date="2008-04" db="EMBL/GenBank/DDBJ databases">
        <authorList>
            <consortium name="NIH - Xenopus Gene Collection (XGC) project"/>
        </authorList>
    </citation>
    <scope>NUCLEOTIDE SEQUENCE [LARGE SCALE MRNA]</scope>
    <source>
        <tissue evidence="10">Gastrula</tissue>
    </source>
</reference>
<evidence type="ECO:0000250" key="1">
    <source>
        <dbReference type="UniProtKB" id="O14641"/>
    </source>
</evidence>
<evidence type="ECO:0000250" key="2">
    <source>
        <dbReference type="UniProtKB" id="Q61062"/>
    </source>
</evidence>
<evidence type="ECO:0000250" key="3">
    <source>
        <dbReference type="UniProtKB" id="Q6DKE2"/>
    </source>
</evidence>
<evidence type="ECO:0000250" key="4">
    <source>
        <dbReference type="UniProtKB" id="Q92997"/>
    </source>
</evidence>
<evidence type="ECO:0000255" key="5"/>
<evidence type="ECO:0000255" key="6">
    <source>
        <dbReference type="PROSITE-ProRule" id="PRU00066"/>
    </source>
</evidence>
<evidence type="ECO:0000255" key="7">
    <source>
        <dbReference type="PROSITE-ProRule" id="PRU00069"/>
    </source>
</evidence>
<evidence type="ECO:0000255" key="8">
    <source>
        <dbReference type="PROSITE-ProRule" id="PRU00143"/>
    </source>
</evidence>
<evidence type="ECO:0000256" key="9">
    <source>
        <dbReference type="SAM" id="MobiDB-lite"/>
    </source>
</evidence>
<evidence type="ECO:0000312" key="10">
    <source>
        <dbReference type="EMBL" id="AAI61453.1"/>
    </source>
</evidence>
<sequence>MGETKVIYHLDEQETPYLVKLPVPAEKVTLGDFKNVLNKPNYKFFFKSMDDDFGVVKEEISDDNAKLPCFNGRVVCWLVSADGSQSDAGSVCADNQSDLPPPIERTGGIGDSRPPSFHPNTRGSQENLDNETETDSVVSAHRERPRRKETPEHATRLNGTSKMERRRDTGGYESSSTLMSSELDSTSFFDSDEDDSTSRFSNSTEQSSASRLMRRHKRRRRKPKAPRIERSSSFSSITDSTMSLNIITVTLNMEKYNFLGISIVGQSNERGDGGIYIGSIMKGGAVAADGRIEPGDMLLQVNDTNFENMSNDDAVRVLREIVHKPGPITLTVAKCWDPSPRNCFTLPRSEPIRPIDPAAWVSHTAAMTGSYPAYGMSPSMSTITSTSSSITSSIPETERFDDFQLSIHSDMVTIVKAMRSPESGLEVRDRMWLKITIPNAFIGSDVVDWLYHHVEGFTDRREARKYASNLLKAGYIRHTVNKITFSEQCYYIFGDLCGNMANLSLNDHDGSSGTSDQDTLAPLPHPGAAPWPIAFQYQYPLPHPYSPHPGFPDPAYSYGGGSAGSQHSEGSRSSGSNRSSTEKRKEREAKGGDTKSGGSGSESDHTTRSSVRRERAASERSVPASEHSHRSHHSIAHSIRSHHTHHSFGPPGIPPLYGAPMMMMPAPASVIGPPGAPPSRDLASVPPELTASRQSFRMAMGNPTKNSGVFDFL</sequence>
<keyword id="KW-0970">Cilium biogenesis/degradation</keyword>
<keyword id="KW-0963">Cytoplasm</keyword>
<keyword id="KW-0217">Developmental protein</keyword>
<keyword id="KW-1185">Reference proteome</keyword>
<keyword id="KW-0879">Wnt signaling pathway</keyword>
<protein>
    <recommendedName>
        <fullName evidence="4">Segment polarity protein dishevelled homolog DVL-3</fullName>
        <shortName evidence="4">Dishevelled-3</shortName>
    </recommendedName>
    <alternativeName>
        <fullName>DSH homolog 3</fullName>
    </alternativeName>
</protein>